<protein>
    <recommendedName>
        <fullName evidence="1">Small ribosomal subunit protein uS9</fullName>
    </recommendedName>
    <alternativeName>
        <fullName>40S ribosomal protein S16</fullName>
    </alternativeName>
</protein>
<dbReference type="EMBL" id="AF429981">
    <property type="protein sequence ID" value="AAL26583.1"/>
    <property type="molecule type" value="mRNA"/>
</dbReference>
<dbReference type="SMR" id="Q95V31"/>
<dbReference type="EnsemblMetazoa" id="XM_035587370.2">
    <property type="protein sequence ID" value="XP_035443263.1"/>
    <property type="gene ID" value="LOC118271317"/>
</dbReference>
<dbReference type="OrthoDB" id="426865at2759"/>
<dbReference type="Proteomes" id="UP000829999">
    <property type="component" value="Unplaced"/>
</dbReference>
<dbReference type="GO" id="GO:0022627">
    <property type="term" value="C:cytosolic small ribosomal subunit"/>
    <property type="evidence" value="ECO:0007669"/>
    <property type="project" value="TreeGrafter"/>
</dbReference>
<dbReference type="GO" id="GO:0003723">
    <property type="term" value="F:RNA binding"/>
    <property type="evidence" value="ECO:0007669"/>
    <property type="project" value="TreeGrafter"/>
</dbReference>
<dbReference type="GO" id="GO:0003735">
    <property type="term" value="F:structural constituent of ribosome"/>
    <property type="evidence" value="ECO:0007669"/>
    <property type="project" value="InterPro"/>
</dbReference>
<dbReference type="GO" id="GO:0000462">
    <property type="term" value="P:maturation of SSU-rRNA from tricistronic rRNA transcript (SSU-rRNA, 5.8S rRNA, LSU-rRNA)"/>
    <property type="evidence" value="ECO:0007669"/>
    <property type="project" value="TreeGrafter"/>
</dbReference>
<dbReference type="GO" id="GO:0006412">
    <property type="term" value="P:translation"/>
    <property type="evidence" value="ECO:0007669"/>
    <property type="project" value="InterPro"/>
</dbReference>
<dbReference type="FunFam" id="3.30.230.10:FF:000184">
    <property type="entry name" value="40S ribosomal protein S16"/>
    <property type="match status" value="1"/>
</dbReference>
<dbReference type="Gene3D" id="3.30.230.10">
    <property type="match status" value="1"/>
</dbReference>
<dbReference type="InterPro" id="IPR020568">
    <property type="entry name" value="Ribosomal_Su5_D2-typ_SF"/>
</dbReference>
<dbReference type="InterPro" id="IPR000754">
    <property type="entry name" value="Ribosomal_uS9"/>
</dbReference>
<dbReference type="InterPro" id="IPR020574">
    <property type="entry name" value="Ribosomal_uS9_CS"/>
</dbReference>
<dbReference type="InterPro" id="IPR014721">
    <property type="entry name" value="Ribsml_uS5_D2-typ_fold_subgr"/>
</dbReference>
<dbReference type="NCBIfam" id="NF001749">
    <property type="entry name" value="PRK00474.1"/>
    <property type="match status" value="1"/>
</dbReference>
<dbReference type="PANTHER" id="PTHR21569:SF16">
    <property type="entry name" value="RIBOSOMAL PROTEIN S16"/>
    <property type="match status" value="1"/>
</dbReference>
<dbReference type="PANTHER" id="PTHR21569">
    <property type="entry name" value="RIBOSOMAL PROTEIN S9"/>
    <property type="match status" value="1"/>
</dbReference>
<dbReference type="Pfam" id="PF00380">
    <property type="entry name" value="Ribosomal_S9"/>
    <property type="match status" value="1"/>
</dbReference>
<dbReference type="SUPFAM" id="SSF54211">
    <property type="entry name" value="Ribosomal protein S5 domain 2-like"/>
    <property type="match status" value="1"/>
</dbReference>
<dbReference type="PROSITE" id="PS00360">
    <property type="entry name" value="RIBOSOMAL_S9"/>
    <property type="match status" value="1"/>
</dbReference>
<evidence type="ECO:0000305" key="1"/>
<comment type="similarity">
    <text evidence="1">Belongs to the universal ribosomal protein uS9 family.</text>
</comment>
<accession>Q95V31</accession>
<gene>
    <name type="primary">RpS16</name>
</gene>
<reference key="1">
    <citation type="journal article" date="2003" name="Bioinformatics">
        <title>Annotation pattern of ESTs from Spodoptera frugiperda Sf9 cells and analysis of the ribosomal protein genes reveal insect-specific features and unexpectedly low codon usage bias.</title>
        <authorList>
            <person name="Landais I."/>
            <person name="Ogliastro M."/>
            <person name="Mita K."/>
            <person name="Nohata J."/>
            <person name="Lopez-Ferber M."/>
            <person name="Duonor-Cerutti M."/>
            <person name="Shimada T."/>
            <person name="Fournier P."/>
            <person name="Devauchelle G."/>
        </authorList>
    </citation>
    <scope>NUCLEOTIDE SEQUENCE [LARGE SCALE MRNA]</scope>
</reference>
<organism>
    <name type="scientific">Spodoptera frugiperda</name>
    <name type="common">Fall armyworm</name>
    <dbReference type="NCBI Taxonomy" id="7108"/>
    <lineage>
        <taxon>Eukaryota</taxon>
        <taxon>Metazoa</taxon>
        <taxon>Ecdysozoa</taxon>
        <taxon>Arthropoda</taxon>
        <taxon>Hexapoda</taxon>
        <taxon>Insecta</taxon>
        <taxon>Pterygota</taxon>
        <taxon>Neoptera</taxon>
        <taxon>Endopterygota</taxon>
        <taxon>Lepidoptera</taxon>
        <taxon>Glossata</taxon>
        <taxon>Ditrysia</taxon>
        <taxon>Noctuoidea</taxon>
        <taxon>Noctuidae</taxon>
        <taxon>Amphipyrinae</taxon>
        <taxon>Spodoptera</taxon>
    </lineage>
</organism>
<proteinExistence type="evidence at transcript level"/>
<feature type="chain" id="PRO_0000111487" description="Small ribosomal subunit protein uS9">
    <location>
        <begin position="1"/>
        <end position="151"/>
    </location>
</feature>
<sequence length="151" mass="17010">MAAPQEARREPIQAVQVFGRKKTATAVAYCKRGHGVLRVNGRPLDLVEPRLLQYKLQEPILLLGKEKFSGVDIRVTVKGGGHVAQVYAIRQAISKALIAFYQKYVDEASKKEIKDILVQYDRSLLVADPRRCEPKKFGGPGARARYQKSYR</sequence>
<name>RS16_SPOFR</name>
<keyword id="KW-0687">Ribonucleoprotein</keyword>
<keyword id="KW-0689">Ribosomal protein</keyword>